<feature type="chain" id="PRO_1000005785" description="DNA-directed RNA polymerase subunit Rpo11">
    <location>
        <begin position="1"/>
        <end position="95"/>
    </location>
</feature>
<evidence type="ECO:0000255" key="1">
    <source>
        <dbReference type="HAMAP-Rule" id="MF_00261"/>
    </source>
</evidence>
<dbReference type="EC" id="2.7.7.6" evidence="1"/>
<dbReference type="EMBL" id="CP000742">
    <property type="protein sequence ID" value="ABR55171.1"/>
    <property type="molecule type" value="Genomic_DNA"/>
</dbReference>
<dbReference type="RefSeq" id="WP_012066086.1">
    <property type="nucleotide sequence ID" value="NC_009634.1"/>
</dbReference>
<dbReference type="SMR" id="A6URP9"/>
<dbReference type="STRING" id="406327.Mevan_1274"/>
<dbReference type="GeneID" id="5324662"/>
<dbReference type="KEGG" id="mvn:Mevan_1274"/>
<dbReference type="eggNOG" id="arCOG04111">
    <property type="taxonomic scope" value="Archaea"/>
</dbReference>
<dbReference type="HOGENOM" id="CLU_090381_5_0_2"/>
<dbReference type="OrthoDB" id="24205at2157"/>
<dbReference type="Proteomes" id="UP000001107">
    <property type="component" value="Chromosome"/>
</dbReference>
<dbReference type="GO" id="GO:0005737">
    <property type="term" value="C:cytoplasm"/>
    <property type="evidence" value="ECO:0007669"/>
    <property type="project" value="UniProtKB-SubCell"/>
</dbReference>
<dbReference type="GO" id="GO:0000428">
    <property type="term" value="C:DNA-directed RNA polymerase complex"/>
    <property type="evidence" value="ECO:0007669"/>
    <property type="project" value="UniProtKB-KW"/>
</dbReference>
<dbReference type="GO" id="GO:0003677">
    <property type="term" value="F:DNA binding"/>
    <property type="evidence" value="ECO:0007669"/>
    <property type="project" value="InterPro"/>
</dbReference>
<dbReference type="GO" id="GO:0003899">
    <property type="term" value="F:DNA-directed RNA polymerase activity"/>
    <property type="evidence" value="ECO:0007669"/>
    <property type="project" value="UniProtKB-UniRule"/>
</dbReference>
<dbReference type="GO" id="GO:0046983">
    <property type="term" value="F:protein dimerization activity"/>
    <property type="evidence" value="ECO:0007669"/>
    <property type="project" value="InterPro"/>
</dbReference>
<dbReference type="GO" id="GO:0006351">
    <property type="term" value="P:DNA-templated transcription"/>
    <property type="evidence" value="ECO:0007669"/>
    <property type="project" value="UniProtKB-UniRule"/>
</dbReference>
<dbReference type="CDD" id="cd06927">
    <property type="entry name" value="RNAP_L"/>
    <property type="match status" value="1"/>
</dbReference>
<dbReference type="Gene3D" id="3.30.1360.10">
    <property type="entry name" value="RNA polymerase, RBP11-like subunit"/>
    <property type="match status" value="1"/>
</dbReference>
<dbReference type="HAMAP" id="MF_00261">
    <property type="entry name" value="RNApol_arch_Rpo11"/>
    <property type="match status" value="1"/>
</dbReference>
<dbReference type="InterPro" id="IPR036603">
    <property type="entry name" value="RBP11-like"/>
</dbReference>
<dbReference type="InterPro" id="IPR009025">
    <property type="entry name" value="RBP11-like_dimer"/>
</dbReference>
<dbReference type="InterPro" id="IPR008193">
    <property type="entry name" value="RNA_pol_Rpb11_13-16kDa_CS"/>
</dbReference>
<dbReference type="InterPro" id="IPR022905">
    <property type="entry name" value="Rpo11-like"/>
</dbReference>
<dbReference type="NCBIfam" id="NF002234">
    <property type="entry name" value="PRK01146.1-2"/>
    <property type="match status" value="1"/>
</dbReference>
<dbReference type="Pfam" id="PF13656">
    <property type="entry name" value="RNA_pol_L_2"/>
    <property type="match status" value="1"/>
</dbReference>
<dbReference type="SUPFAM" id="SSF55257">
    <property type="entry name" value="RBP11-like subunits of RNA polymerase"/>
    <property type="match status" value="1"/>
</dbReference>
<dbReference type="PROSITE" id="PS01154">
    <property type="entry name" value="RNA_POL_L_13KD"/>
    <property type="match status" value="1"/>
</dbReference>
<name>RPO11_METVS</name>
<sequence>MSYINIIEKSENSIELELVNDDHSLSNALKESLLSKKGVVIASYGVEHPVLHPETGRYISNPTLVLKTEGVLAEKVLKEALRDIIDLCSNCLEEL</sequence>
<gene>
    <name evidence="1" type="primary">rpo11</name>
    <name evidence="1" type="synonym">rpoL</name>
    <name type="ordered locus">Mevan_1274</name>
</gene>
<comment type="function">
    <text evidence="1">DNA-dependent RNA polymerase (RNAP) catalyzes the transcription of DNA into RNA using the four ribonucleoside triphosphates as substrates.</text>
</comment>
<comment type="catalytic activity">
    <reaction evidence="1">
        <text>RNA(n) + a ribonucleoside 5'-triphosphate = RNA(n+1) + diphosphate</text>
        <dbReference type="Rhea" id="RHEA:21248"/>
        <dbReference type="Rhea" id="RHEA-COMP:14527"/>
        <dbReference type="Rhea" id="RHEA-COMP:17342"/>
        <dbReference type="ChEBI" id="CHEBI:33019"/>
        <dbReference type="ChEBI" id="CHEBI:61557"/>
        <dbReference type="ChEBI" id="CHEBI:140395"/>
        <dbReference type="EC" id="2.7.7.6"/>
    </reaction>
</comment>
<comment type="subunit">
    <text evidence="1">Part of the RNA polymerase complex.</text>
</comment>
<comment type="subcellular location">
    <subcellularLocation>
        <location evidence="1">Cytoplasm</location>
    </subcellularLocation>
</comment>
<comment type="similarity">
    <text evidence="1">Belongs to the archaeal Rpo11/eukaryotic RPB11/RPC19 RNA polymerase subunit family.</text>
</comment>
<keyword id="KW-0963">Cytoplasm</keyword>
<keyword id="KW-0240">DNA-directed RNA polymerase</keyword>
<keyword id="KW-0548">Nucleotidyltransferase</keyword>
<keyword id="KW-0804">Transcription</keyword>
<keyword id="KW-0808">Transferase</keyword>
<reference key="1">
    <citation type="submission" date="2007-06" db="EMBL/GenBank/DDBJ databases">
        <title>Complete sequence of Methanococcus vannielii SB.</title>
        <authorList>
            <consortium name="US DOE Joint Genome Institute"/>
            <person name="Copeland A."/>
            <person name="Lucas S."/>
            <person name="Lapidus A."/>
            <person name="Barry K."/>
            <person name="Glavina del Rio T."/>
            <person name="Dalin E."/>
            <person name="Tice H."/>
            <person name="Pitluck S."/>
            <person name="Chain P."/>
            <person name="Malfatti S."/>
            <person name="Shin M."/>
            <person name="Vergez L."/>
            <person name="Schmutz J."/>
            <person name="Larimer F."/>
            <person name="Land M."/>
            <person name="Hauser L."/>
            <person name="Kyrpides N."/>
            <person name="Anderson I."/>
            <person name="Sieprawska-Lupa M."/>
            <person name="Whitman W.B."/>
            <person name="Richardson P."/>
        </authorList>
    </citation>
    <scope>NUCLEOTIDE SEQUENCE [LARGE SCALE GENOMIC DNA]</scope>
    <source>
        <strain>ATCC 35089 / DSM 1224 / JCM 13029 / OCM 148 / SB</strain>
    </source>
</reference>
<proteinExistence type="inferred from homology"/>
<organism>
    <name type="scientific">Methanococcus vannielii (strain ATCC 35089 / DSM 1224 / JCM 13029 / OCM 148 / SB)</name>
    <dbReference type="NCBI Taxonomy" id="406327"/>
    <lineage>
        <taxon>Archaea</taxon>
        <taxon>Methanobacteriati</taxon>
        <taxon>Methanobacteriota</taxon>
        <taxon>Methanomada group</taxon>
        <taxon>Methanococci</taxon>
        <taxon>Methanococcales</taxon>
        <taxon>Methanococcaceae</taxon>
        <taxon>Methanococcus</taxon>
    </lineage>
</organism>
<accession>A6URP9</accession>
<protein>
    <recommendedName>
        <fullName evidence="1">DNA-directed RNA polymerase subunit Rpo11</fullName>
        <ecNumber evidence="1">2.7.7.6</ecNumber>
    </recommendedName>
    <alternativeName>
        <fullName evidence="1">DNA-directed RNA polymerase subunit L</fullName>
    </alternativeName>
</protein>